<evidence type="ECO:0000255" key="1">
    <source>
        <dbReference type="HAMAP-Rule" id="MF_01973"/>
    </source>
</evidence>
<evidence type="ECO:0000255" key="2">
    <source>
        <dbReference type="PROSITE-ProRule" id="PRU01122"/>
    </source>
</evidence>
<evidence type="ECO:0000255" key="3">
    <source>
        <dbReference type="PROSITE-ProRule" id="PRU01123"/>
    </source>
</evidence>
<protein>
    <recommendedName>
        <fullName evidence="1">Lon protease</fullName>
        <ecNumber evidence="1">3.4.21.53</ecNumber>
    </recommendedName>
    <alternativeName>
        <fullName evidence="1">ATP-dependent protease La</fullName>
    </alternativeName>
</protein>
<feature type="chain" id="PRO_0000396563" description="Lon protease">
    <location>
        <begin position="1"/>
        <end position="810"/>
    </location>
</feature>
<feature type="domain" description="Lon N-terminal" evidence="3">
    <location>
        <begin position="32"/>
        <end position="226"/>
    </location>
</feature>
<feature type="domain" description="Lon proteolytic" evidence="2">
    <location>
        <begin position="612"/>
        <end position="791"/>
    </location>
</feature>
<feature type="active site" evidence="1">
    <location>
        <position position="697"/>
    </location>
</feature>
<feature type="active site" evidence="1">
    <location>
        <position position="740"/>
    </location>
</feature>
<feature type="binding site" evidence="1">
    <location>
        <begin position="376"/>
        <end position="383"/>
    </location>
    <ligand>
        <name>ATP</name>
        <dbReference type="ChEBI" id="CHEBI:30616"/>
    </ligand>
</feature>
<name>LON_FERNB</name>
<sequence length="810" mass="92111">MPNKNDNKGKYSRLEKEAKKAREEKISIPNVLPAIAMRSNMVIFPNTVVPFYVGREISLMALEEAMEKTNQIVFVVNQKDPAVETPTEKDLYKVGTIVRIIQVGKLPDETFKVLVEGIARAKWIKNVGEKFFKFEIEILRTRYGKSKRLIALMRMVKEELHKYVQYSRKIPPETLMLLEDVDNPDVFADIAASLCPGNIEEKQQLLEIVHPANRLERILDILARETELLEIEQQLDQKVKERIEKSQREYYLREKLRVIRDELGGEEDIEIKELKEKIENNNYPEFVKEKARAEINRLEKMSPYAPEATVVRTYLDWILNLPWHEKTDDTDDINFAEKVLNEDHYGLDEPKRRILEYLATRKVSQKAKAPIICFVGPPGVGKTSLAKSIARAMNRKFGRMSLGGLRDEAEIRGHRRTYVGAMPGRIMQLIRKLGVKNPVILLDEIDKMGISFQGDPASALLEVLDPEQNKEFVDHYIELPYDLSEVLFVTTANVLYTIPPALRDRMEVIEISSYTDVEKFYIAKNYIIPKIESEFVEKADEIFSFKDTAIKKIINEYTLEPGVRELEREIRSVVRKATLDAIKTGKKIVISPEKVTEYLGPSKIKDEDKLEKPMIGVTTGLAWTPNGGTTLYIESTLIPGNGGLIITGQLGDVMKESVRIALSLARKIVGDEYAEKFTKNDIHVHVPEGAVPKDGPSAGVTITTALVSVVKNIPVRNDIAMTGEITLRGRVLPVGGIKEKVMAAYRKGIYHVILPKKNEVDIEKVPEVVRTKMKFTFVETIEEVLEVALNEDNSKESRKGRTRKGNSNTK</sequence>
<dbReference type="EC" id="3.4.21.53" evidence="1"/>
<dbReference type="EMBL" id="CP000771">
    <property type="protein sequence ID" value="ABS60272.1"/>
    <property type="molecule type" value="Genomic_DNA"/>
</dbReference>
<dbReference type="RefSeq" id="WP_011993592.1">
    <property type="nucleotide sequence ID" value="NC_009718.1"/>
</dbReference>
<dbReference type="SMR" id="A7HK39"/>
<dbReference type="STRING" id="381764.Fnod_0407"/>
<dbReference type="MEROPS" id="S16.001"/>
<dbReference type="KEGG" id="fno:Fnod_0407"/>
<dbReference type="eggNOG" id="COG0466">
    <property type="taxonomic scope" value="Bacteria"/>
</dbReference>
<dbReference type="HOGENOM" id="CLU_004109_4_3_0"/>
<dbReference type="OrthoDB" id="9803599at2"/>
<dbReference type="Proteomes" id="UP000002415">
    <property type="component" value="Chromosome"/>
</dbReference>
<dbReference type="GO" id="GO:0005737">
    <property type="term" value="C:cytoplasm"/>
    <property type="evidence" value="ECO:0007669"/>
    <property type="project" value="UniProtKB-SubCell"/>
</dbReference>
<dbReference type="GO" id="GO:0005524">
    <property type="term" value="F:ATP binding"/>
    <property type="evidence" value="ECO:0007669"/>
    <property type="project" value="UniProtKB-UniRule"/>
</dbReference>
<dbReference type="GO" id="GO:0016887">
    <property type="term" value="F:ATP hydrolysis activity"/>
    <property type="evidence" value="ECO:0007669"/>
    <property type="project" value="UniProtKB-UniRule"/>
</dbReference>
<dbReference type="GO" id="GO:0004176">
    <property type="term" value="F:ATP-dependent peptidase activity"/>
    <property type="evidence" value="ECO:0007669"/>
    <property type="project" value="UniProtKB-UniRule"/>
</dbReference>
<dbReference type="GO" id="GO:0043565">
    <property type="term" value="F:sequence-specific DNA binding"/>
    <property type="evidence" value="ECO:0007669"/>
    <property type="project" value="UniProtKB-UniRule"/>
</dbReference>
<dbReference type="GO" id="GO:0004252">
    <property type="term" value="F:serine-type endopeptidase activity"/>
    <property type="evidence" value="ECO:0007669"/>
    <property type="project" value="UniProtKB-UniRule"/>
</dbReference>
<dbReference type="GO" id="GO:0034605">
    <property type="term" value="P:cellular response to heat"/>
    <property type="evidence" value="ECO:0007669"/>
    <property type="project" value="UniProtKB-UniRule"/>
</dbReference>
<dbReference type="GO" id="GO:0006515">
    <property type="term" value="P:protein quality control for misfolded or incompletely synthesized proteins"/>
    <property type="evidence" value="ECO:0007669"/>
    <property type="project" value="UniProtKB-UniRule"/>
</dbReference>
<dbReference type="CDD" id="cd19500">
    <property type="entry name" value="RecA-like_Lon"/>
    <property type="match status" value="1"/>
</dbReference>
<dbReference type="FunFam" id="1.20.5.5270:FF:000002">
    <property type="entry name" value="Lon protease homolog"/>
    <property type="match status" value="1"/>
</dbReference>
<dbReference type="FunFam" id="3.40.50.300:FF:000021">
    <property type="entry name" value="Lon protease homolog"/>
    <property type="match status" value="1"/>
</dbReference>
<dbReference type="Gene3D" id="1.10.8.60">
    <property type="match status" value="1"/>
</dbReference>
<dbReference type="Gene3D" id="1.20.5.5270">
    <property type="match status" value="1"/>
</dbReference>
<dbReference type="Gene3D" id="1.20.58.1480">
    <property type="match status" value="1"/>
</dbReference>
<dbReference type="Gene3D" id="3.30.230.10">
    <property type="match status" value="1"/>
</dbReference>
<dbReference type="Gene3D" id="2.30.130.40">
    <property type="entry name" value="LON domain-like"/>
    <property type="match status" value="1"/>
</dbReference>
<dbReference type="Gene3D" id="3.40.50.300">
    <property type="entry name" value="P-loop containing nucleotide triphosphate hydrolases"/>
    <property type="match status" value="1"/>
</dbReference>
<dbReference type="HAMAP" id="MF_01973">
    <property type="entry name" value="lon_bact"/>
    <property type="match status" value="1"/>
</dbReference>
<dbReference type="InterPro" id="IPR003593">
    <property type="entry name" value="AAA+_ATPase"/>
</dbReference>
<dbReference type="InterPro" id="IPR003959">
    <property type="entry name" value="ATPase_AAA_core"/>
</dbReference>
<dbReference type="InterPro" id="IPR027543">
    <property type="entry name" value="Lon_bac"/>
</dbReference>
<dbReference type="InterPro" id="IPR004815">
    <property type="entry name" value="Lon_bac/euk-typ"/>
</dbReference>
<dbReference type="InterPro" id="IPR054594">
    <property type="entry name" value="Lon_lid"/>
</dbReference>
<dbReference type="InterPro" id="IPR008269">
    <property type="entry name" value="Lon_proteolytic"/>
</dbReference>
<dbReference type="InterPro" id="IPR027065">
    <property type="entry name" value="Lon_Prtase"/>
</dbReference>
<dbReference type="InterPro" id="IPR003111">
    <property type="entry name" value="Lon_prtase_N"/>
</dbReference>
<dbReference type="InterPro" id="IPR046336">
    <property type="entry name" value="Lon_prtase_N_sf"/>
</dbReference>
<dbReference type="InterPro" id="IPR027417">
    <property type="entry name" value="P-loop_NTPase"/>
</dbReference>
<dbReference type="InterPro" id="IPR008268">
    <property type="entry name" value="Peptidase_S16_AS"/>
</dbReference>
<dbReference type="InterPro" id="IPR015947">
    <property type="entry name" value="PUA-like_sf"/>
</dbReference>
<dbReference type="InterPro" id="IPR020568">
    <property type="entry name" value="Ribosomal_Su5_D2-typ_SF"/>
</dbReference>
<dbReference type="InterPro" id="IPR014721">
    <property type="entry name" value="Ribsml_uS5_D2-typ_fold_subgr"/>
</dbReference>
<dbReference type="NCBIfam" id="TIGR00763">
    <property type="entry name" value="lon"/>
    <property type="match status" value="1"/>
</dbReference>
<dbReference type="PANTHER" id="PTHR10046">
    <property type="entry name" value="ATP DEPENDENT LON PROTEASE FAMILY MEMBER"/>
    <property type="match status" value="1"/>
</dbReference>
<dbReference type="Pfam" id="PF00004">
    <property type="entry name" value="AAA"/>
    <property type="match status" value="1"/>
</dbReference>
<dbReference type="Pfam" id="PF05362">
    <property type="entry name" value="Lon_C"/>
    <property type="match status" value="1"/>
</dbReference>
<dbReference type="Pfam" id="PF22667">
    <property type="entry name" value="Lon_lid"/>
    <property type="match status" value="1"/>
</dbReference>
<dbReference type="Pfam" id="PF02190">
    <property type="entry name" value="LON_substr_bdg"/>
    <property type="match status" value="1"/>
</dbReference>
<dbReference type="PIRSF" id="PIRSF001174">
    <property type="entry name" value="Lon_proteas"/>
    <property type="match status" value="1"/>
</dbReference>
<dbReference type="PRINTS" id="PR00830">
    <property type="entry name" value="ENDOLAPTASE"/>
</dbReference>
<dbReference type="SMART" id="SM00382">
    <property type="entry name" value="AAA"/>
    <property type="match status" value="1"/>
</dbReference>
<dbReference type="SMART" id="SM00464">
    <property type="entry name" value="LON"/>
    <property type="match status" value="1"/>
</dbReference>
<dbReference type="SUPFAM" id="SSF52540">
    <property type="entry name" value="P-loop containing nucleoside triphosphate hydrolases"/>
    <property type="match status" value="1"/>
</dbReference>
<dbReference type="SUPFAM" id="SSF88697">
    <property type="entry name" value="PUA domain-like"/>
    <property type="match status" value="1"/>
</dbReference>
<dbReference type="SUPFAM" id="SSF54211">
    <property type="entry name" value="Ribosomal protein S5 domain 2-like"/>
    <property type="match status" value="1"/>
</dbReference>
<dbReference type="PROSITE" id="PS51787">
    <property type="entry name" value="LON_N"/>
    <property type="match status" value="1"/>
</dbReference>
<dbReference type="PROSITE" id="PS51786">
    <property type="entry name" value="LON_PROTEOLYTIC"/>
    <property type="match status" value="1"/>
</dbReference>
<dbReference type="PROSITE" id="PS01046">
    <property type="entry name" value="LON_SER"/>
    <property type="match status" value="1"/>
</dbReference>
<gene>
    <name evidence="1" type="primary">lon</name>
    <name type="ordered locus">Fnod_0407</name>
</gene>
<organism>
    <name type="scientific">Fervidobacterium nodosum (strain ATCC 35602 / DSM 5306 / Rt17-B1)</name>
    <dbReference type="NCBI Taxonomy" id="381764"/>
    <lineage>
        <taxon>Bacteria</taxon>
        <taxon>Thermotogati</taxon>
        <taxon>Thermotogota</taxon>
        <taxon>Thermotogae</taxon>
        <taxon>Thermotogales</taxon>
        <taxon>Fervidobacteriaceae</taxon>
        <taxon>Fervidobacterium</taxon>
    </lineage>
</organism>
<proteinExistence type="inferred from homology"/>
<keyword id="KW-0067">ATP-binding</keyword>
<keyword id="KW-0963">Cytoplasm</keyword>
<keyword id="KW-0378">Hydrolase</keyword>
<keyword id="KW-0547">Nucleotide-binding</keyword>
<keyword id="KW-0645">Protease</keyword>
<keyword id="KW-1185">Reference proteome</keyword>
<keyword id="KW-0720">Serine protease</keyword>
<keyword id="KW-0346">Stress response</keyword>
<accession>A7HK39</accession>
<comment type="function">
    <text evidence="1">ATP-dependent serine protease that mediates the selective degradation of mutant and abnormal proteins as well as certain short-lived regulatory proteins. Required for cellular homeostasis and for survival from DNA damage and developmental changes induced by stress. Degrades polypeptides processively to yield small peptide fragments that are 5 to 10 amino acids long. Binds to DNA in a double-stranded, site-specific manner.</text>
</comment>
<comment type="catalytic activity">
    <reaction evidence="1">
        <text>Hydrolysis of proteins in presence of ATP.</text>
        <dbReference type="EC" id="3.4.21.53"/>
    </reaction>
</comment>
<comment type="subunit">
    <text evidence="1">Homohexamer. Organized in a ring with a central cavity.</text>
</comment>
<comment type="subcellular location">
    <subcellularLocation>
        <location evidence="1">Cytoplasm</location>
    </subcellularLocation>
</comment>
<comment type="induction">
    <text evidence="1">By heat shock.</text>
</comment>
<comment type="similarity">
    <text evidence="1">Belongs to the peptidase S16 family.</text>
</comment>
<reference key="1">
    <citation type="submission" date="2007-07" db="EMBL/GenBank/DDBJ databases">
        <title>Complete sequence of Fervidobacterium nodosum Rt17-B1.</title>
        <authorList>
            <consortium name="US DOE Joint Genome Institute"/>
            <person name="Copeland A."/>
            <person name="Lucas S."/>
            <person name="Lapidus A."/>
            <person name="Barry K."/>
            <person name="Glavina del Rio T."/>
            <person name="Dalin E."/>
            <person name="Tice H."/>
            <person name="Pitluck S."/>
            <person name="Saunders E."/>
            <person name="Brettin T."/>
            <person name="Bruce D."/>
            <person name="Detter J.C."/>
            <person name="Han C."/>
            <person name="Schmutz J."/>
            <person name="Larimer F."/>
            <person name="Land M."/>
            <person name="Hauser L."/>
            <person name="Kyrpides N."/>
            <person name="Mikhailova N."/>
            <person name="Nelson K."/>
            <person name="Gogarten J.P."/>
            <person name="Noll K."/>
            <person name="Richardson P."/>
        </authorList>
    </citation>
    <scope>NUCLEOTIDE SEQUENCE [LARGE SCALE GENOMIC DNA]</scope>
    <source>
        <strain>ATCC 35602 / DSM 5306 / Rt17-B1</strain>
    </source>
</reference>